<comment type="function">
    <text evidence="1">Catalytic component of the COP9 signalosome (CSN) complex that acts as an regulator of the ubiquitin (Ubl) conjugation pathway by mediating the deneddylation of the cullin subunit of SCF-type E3 ubiquitin-protein ligase complexes. The CSN complex is involved in the regulation of the mating pheromone response.</text>
</comment>
<comment type="subunit">
    <text evidence="1">Component of the COP9 signalosome (CSN) complex.</text>
</comment>
<comment type="subcellular location">
    <subcellularLocation>
        <location evidence="1">Cytoplasm</location>
    </subcellularLocation>
    <subcellularLocation>
        <location evidence="1">Nucleus</location>
    </subcellularLocation>
</comment>
<comment type="domain">
    <text evidence="1">The JAMM motif is essential for the protease activity of the CSN complex resulting in deneddylation of cullins. It constitutes the catalytic center of the complex (By similarity).</text>
</comment>
<comment type="similarity">
    <text evidence="3">Belongs to the peptidase M67A family. CSN5 subfamily.</text>
</comment>
<feature type="chain" id="PRO_0000194846" description="COP9 signalosome complex subunit 5">
    <location>
        <begin position="1"/>
        <end position="420"/>
    </location>
</feature>
<feature type="domain" description="MPN" evidence="2">
    <location>
        <begin position="73"/>
        <end position="208"/>
    </location>
</feature>
<feature type="short sequence motif" description="JAMM motif" evidence="2">
    <location>
        <begin position="154"/>
        <end position="167"/>
    </location>
</feature>
<feature type="binding site" evidence="2">
    <location>
        <position position="154"/>
    </location>
    <ligand>
        <name>Zn(2+)</name>
        <dbReference type="ChEBI" id="CHEBI:29105"/>
        <note>catalytic</note>
    </ligand>
</feature>
<feature type="binding site" evidence="2">
    <location>
        <position position="156"/>
    </location>
    <ligand>
        <name>Zn(2+)</name>
        <dbReference type="ChEBI" id="CHEBI:29105"/>
        <note>catalytic</note>
    </ligand>
</feature>
<feature type="binding site" evidence="2">
    <location>
        <position position="167"/>
    </location>
    <ligand>
        <name>Zn(2+)</name>
        <dbReference type="ChEBI" id="CHEBI:29105"/>
        <note>catalytic</note>
    </ligand>
</feature>
<gene>
    <name type="primary">RRI1</name>
    <name type="synonym">CSN5</name>
    <name type="ordered locus">ABL146C</name>
</gene>
<protein>
    <recommendedName>
        <fullName>COP9 signalosome complex subunit 5</fullName>
        <ecNumber>3.4.-.-</ecNumber>
    </recommendedName>
</protein>
<sequence>MDTPSAALHRHTVGQLRKLLLHREGSAGCGRLQPALDGSQPLDSPLSTVPSSRSQVRVQQELWKQDPTYFQKAALSALACMKILRHAFDGGDMEVLGMLLGYVQDEMIVVVDSYRLPVEGTETRVNAQMESYEYTVQYLETAVPEGLAIVGWYHSHPGYGCWLSGIDAETQTLNQNFQDPYLAIVVDPKRSKASGVIDIGAFRTMPETADTRSVSSHSNASRYGHHSARYYELEVSYFEVPQERRWCDSRLSVEPPKPADATERAMLAQLLEAAKACKNVKRLQTVDRALVPESIGPYALREQADQDLQFRRPLRSFSSNSIARRSSTEVALGNANEELDPLPTLADANLRNHDSPSADMAMDNTSISSNEEQPHLTFQESSGVQLNAAETEYFDIKNELLTLKLLEYQKARFYRDAFTL</sequence>
<reference key="1">
    <citation type="journal article" date="2004" name="Science">
        <title>The Ashbya gossypii genome as a tool for mapping the ancient Saccharomyces cerevisiae genome.</title>
        <authorList>
            <person name="Dietrich F.S."/>
            <person name="Voegeli S."/>
            <person name="Brachat S."/>
            <person name="Lerch A."/>
            <person name="Gates K."/>
            <person name="Steiner S."/>
            <person name="Mohr C."/>
            <person name="Poehlmann R."/>
            <person name="Luedi P."/>
            <person name="Choi S."/>
            <person name="Wing R.A."/>
            <person name="Flavier A."/>
            <person name="Gaffney T.D."/>
            <person name="Philippsen P."/>
        </authorList>
    </citation>
    <scope>NUCLEOTIDE SEQUENCE [LARGE SCALE GENOMIC DNA]</scope>
    <source>
        <strain>ATCC 10895 / CBS 109.51 / FGSC 9923 / NRRL Y-1056</strain>
    </source>
</reference>
<reference key="2">
    <citation type="journal article" date="2013" name="G3 (Bethesda)">
        <title>Genomes of Ashbya fungi isolated from insects reveal four mating-type loci, numerous translocations, lack of transposons, and distinct gene duplications.</title>
        <authorList>
            <person name="Dietrich F.S."/>
            <person name="Voegeli S."/>
            <person name="Kuo S."/>
            <person name="Philippsen P."/>
        </authorList>
    </citation>
    <scope>GENOME REANNOTATION</scope>
    <source>
        <strain>ATCC 10895 / CBS 109.51 / FGSC 9923 / NRRL Y-1056</strain>
    </source>
</reference>
<keyword id="KW-0963">Cytoplasm</keyword>
<keyword id="KW-0378">Hydrolase</keyword>
<keyword id="KW-0479">Metal-binding</keyword>
<keyword id="KW-0482">Metalloprotease</keyword>
<keyword id="KW-0539">Nucleus</keyword>
<keyword id="KW-0645">Protease</keyword>
<keyword id="KW-1185">Reference proteome</keyword>
<keyword id="KW-0736">Signalosome</keyword>
<keyword id="KW-0862">Zinc</keyword>
<accession>Q75E19</accession>
<dbReference type="EC" id="3.4.-.-"/>
<dbReference type="EMBL" id="AE016815">
    <property type="protein sequence ID" value="AAS50625.1"/>
    <property type="molecule type" value="Genomic_DNA"/>
</dbReference>
<dbReference type="RefSeq" id="NP_982801.1">
    <property type="nucleotide sequence ID" value="NM_208154.1"/>
</dbReference>
<dbReference type="SMR" id="Q75E19"/>
<dbReference type="FunCoup" id="Q75E19">
    <property type="interactions" value="62"/>
</dbReference>
<dbReference type="STRING" id="284811.Q75E19"/>
<dbReference type="EnsemblFungi" id="AAS50625">
    <property type="protein sequence ID" value="AAS50625"/>
    <property type="gene ID" value="AGOS_ABL146C"/>
</dbReference>
<dbReference type="GeneID" id="4618881"/>
<dbReference type="KEGG" id="ago:AGOS_ABL146C"/>
<dbReference type="eggNOG" id="KOG1554">
    <property type="taxonomic scope" value="Eukaryota"/>
</dbReference>
<dbReference type="HOGENOM" id="CLU_031199_1_0_1"/>
<dbReference type="InParanoid" id="Q75E19"/>
<dbReference type="OMA" id="QMESYEY"/>
<dbReference type="OrthoDB" id="605656at2759"/>
<dbReference type="Proteomes" id="UP000000591">
    <property type="component" value="Chromosome II"/>
</dbReference>
<dbReference type="GO" id="GO:0008180">
    <property type="term" value="C:COP9 signalosome"/>
    <property type="evidence" value="ECO:0000318"/>
    <property type="project" value="GO_Central"/>
</dbReference>
<dbReference type="GO" id="GO:0005737">
    <property type="term" value="C:cytoplasm"/>
    <property type="evidence" value="ECO:0000318"/>
    <property type="project" value="GO_Central"/>
</dbReference>
<dbReference type="GO" id="GO:0019784">
    <property type="term" value="F:deNEDDylase activity"/>
    <property type="evidence" value="ECO:0000318"/>
    <property type="project" value="GO_Central"/>
</dbReference>
<dbReference type="GO" id="GO:0046872">
    <property type="term" value="F:metal ion binding"/>
    <property type="evidence" value="ECO:0007669"/>
    <property type="project" value="UniProtKB-KW"/>
</dbReference>
<dbReference type="GO" id="GO:0004222">
    <property type="term" value="F:metalloendopeptidase activity"/>
    <property type="evidence" value="ECO:0007669"/>
    <property type="project" value="EnsemblFungi"/>
</dbReference>
<dbReference type="GO" id="GO:0008237">
    <property type="term" value="F:metallopeptidase activity"/>
    <property type="evidence" value="ECO:0000318"/>
    <property type="project" value="GO_Central"/>
</dbReference>
<dbReference type="GO" id="GO:0071444">
    <property type="term" value="P:cellular response to pheromone"/>
    <property type="evidence" value="ECO:0007669"/>
    <property type="project" value="EnsemblFungi"/>
</dbReference>
<dbReference type="GO" id="GO:0000747">
    <property type="term" value="P:conjugation with cellular fusion"/>
    <property type="evidence" value="ECO:0007669"/>
    <property type="project" value="EnsemblFungi"/>
</dbReference>
<dbReference type="GO" id="GO:0070452">
    <property type="term" value="P:positive regulation of ergosterol biosynthetic process"/>
    <property type="evidence" value="ECO:0007669"/>
    <property type="project" value="EnsemblFungi"/>
</dbReference>
<dbReference type="GO" id="GO:0000338">
    <property type="term" value="P:protein deneddylation"/>
    <property type="evidence" value="ECO:0007669"/>
    <property type="project" value="EnsemblFungi"/>
</dbReference>
<dbReference type="GO" id="GO:0006508">
    <property type="term" value="P:proteolysis"/>
    <property type="evidence" value="ECO:0007669"/>
    <property type="project" value="UniProtKB-KW"/>
</dbReference>
<dbReference type="GO" id="GO:0051726">
    <property type="term" value="P:regulation of cell cycle"/>
    <property type="evidence" value="ECO:0000318"/>
    <property type="project" value="GO_Central"/>
</dbReference>
<dbReference type="CDD" id="cd08069">
    <property type="entry name" value="MPN_RPN11_CSN5"/>
    <property type="match status" value="1"/>
</dbReference>
<dbReference type="FunFam" id="3.40.140.10:FF:000076">
    <property type="entry name" value="COP9 signalosome complex subunit 5"/>
    <property type="match status" value="1"/>
</dbReference>
<dbReference type="Gene3D" id="3.40.140.10">
    <property type="entry name" value="Cytidine Deaminase, domain 2"/>
    <property type="match status" value="1"/>
</dbReference>
<dbReference type="InterPro" id="IPR000555">
    <property type="entry name" value="JAMM/MPN+_dom"/>
</dbReference>
<dbReference type="InterPro" id="IPR050242">
    <property type="entry name" value="JAMM_MPN+_peptidase_M67A"/>
</dbReference>
<dbReference type="InterPro" id="IPR037518">
    <property type="entry name" value="MPN"/>
</dbReference>
<dbReference type="PANTHER" id="PTHR10410">
    <property type="entry name" value="EUKARYOTIC TRANSLATION INITIATION FACTOR 3 -RELATED"/>
    <property type="match status" value="1"/>
</dbReference>
<dbReference type="Pfam" id="PF01398">
    <property type="entry name" value="JAB"/>
    <property type="match status" value="1"/>
</dbReference>
<dbReference type="SMART" id="SM00232">
    <property type="entry name" value="JAB_MPN"/>
    <property type="match status" value="1"/>
</dbReference>
<dbReference type="SUPFAM" id="SSF102712">
    <property type="entry name" value="JAB1/MPN domain"/>
    <property type="match status" value="1"/>
</dbReference>
<dbReference type="PROSITE" id="PS50249">
    <property type="entry name" value="MPN"/>
    <property type="match status" value="1"/>
</dbReference>
<proteinExistence type="inferred from homology"/>
<organism>
    <name type="scientific">Eremothecium gossypii (strain ATCC 10895 / CBS 109.51 / FGSC 9923 / NRRL Y-1056)</name>
    <name type="common">Yeast</name>
    <name type="synonym">Ashbya gossypii</name>
    <dbReference type="NCBI Taxonomy" id="284811"/>
    <lineage>
        <taxon>Eukaryota</taxon>
        <taxon>Fungi</taxon>
        <taxon>Dikarya</taxon>
        <taxon>Ascomycota</taxon>
        <taxon>Saccharomycotina</taxon>
        <taxon>Saccharomycetes</taxon>
        <taxon>Saccharomycetales</taxon>
        <taxon>Saccharomycetaceae</taxon>
        <taxon>Eremothecium</taxon>
    </lineage>
</organism>
<evidence type="ECO:0000250" key="1"/>
<evidence type="ECO:0000255" key="2">
    <source>
        <dbReference type="PROSITE-ProRule" id="PRU01182"/>
    </source>
</evidence>
<evidence type="ECO:0000305" key="3"/>
<name>CSN5_EREGS</name>